<protein>
    <recommendedName>
        <fullName evidence="1">ATP-dependent Clp protease adapter protein ClpS</fullName>
    </recommendedName>
</protein>
<organism>
    <name type="scientific">Campylobacter jejuni subsp. jejuni serotype O:23/36 (strain 81-176)</name>
    <dbReference type="NCBI Taxonomy" id="354242"/>
    <lineage>
        <taxon>Bacteria</taxon>
        <taxon>Pseudomonadati</taxon>
        <taxon>Campylobacterota</taxon>
        <taxon>Epsilonproteobacteria</taxon>
        <taxon>Campylobacterales</taxon>
        <taxon>Campylobacteraceae</taxon>
        <taxon>Campylobacter</taxon>
    </lineage>
</organism>
<name>CLPS_CAMJJ</name>
<accession>A1W094</accession>
<sequence length="96" mass="10919">MPKTQTLEQTKLSEPKMYKVILLNDDVTTMDFVIEILMNIFHQNLEKASQTMLEIHHNGSGICGIYTQEIALSKQKKVIDAAKLANFPLQAKVEEE</sequence>
<proteinExistence type="inferred from homology"/>
<comment type="function">
    <text evidence="1">Involved in the modulation of the specificity of the ClpAP-mediated ATP-dependent protein degradation.</text>
</comment>
<comment type="subunit">
    <text evidence="1">Binds to the N-terminal domain of the chaperone ClpA.</text>
</comment>
<comment type="similarity">
    <text evidence="1">Belongs to the ClpS family.</text>
</comment>
<dbReference type="EMBL" id="CP000538">
    <property type="protein sequence ID" value="EAQ72219.1"/>
    <property type="molecule type" value="Genomic_DNA"/>
</dbReference>
<dbReference type="RefSeq" id="WP_002856038.1">
    <property type="nucleotide sequence ID" value="NC_008787.1"/>
</dbReference>
<dbReference type="SMR" id="A1W094"/>
<dbReference type="KEGG" id="cjj:CJJ81176_1125"/>
<dbReference type="eggNOG" id="COG2127">
    <property type="taxonomic scope" value="Bacteria"/>
</dbReference>
<dbReference type="HOGENOM" id="CLU_134358_1_0_7"/>
<dbReference type="Proteomes" id="UP000000646">
    <property type="component" value="Chromosome"/>
</dbReference>
<dbReference type="GO" id="GO:0030163">
    <property type="term" value="P:protein catabolic process"/>
    <property type="evidence" value="ECO:0007669"/>
    <property type="project" value="InterPro"/>
</dbReference>
<dbReference type="GO" id="GO:0006508">
    <property type="term" value="P:proteolysis"/>
    <property type="evidence" value="ECO:0007669"/>
    <property type="project" value="UniProtKB-UniRule"/>
</dbReference>
<dbReference type="FunFam" id="3.30.1390.10:FF:000002">
    <property type="entry name" value="ATP-dependent Clp protease adapter protein ClpS"/>
    <property type="match status" value="1"/>
</dbReference>
<dbReference type="Gene3D" id="3.30.1390.10">
    <property type="match status" value="1"/>
</dbReference>
<dbReference type="HAMAP" id="MF_00302">
    <property type="entry name" value="ClpS"/>
    <property type="match status" value="1"/>
</dbReference>
<dbReference type="InterPro" id="IPR022935">
    <property type="entry name" value="ClpS"/>
</dbReference>
<dbReference type="InterPro" id="IPR003769">
    <property type="entry name" value="ClpS_core"/>
</dbReference>
<dbReference type="InterPro" id="IPR014719">
    <property type="entry name" value="Ribosomal_bL12_C/ClpS-like"/>
</dbReference>
<dbReference type="PANTHER" id="PTHR33473:SF19">
    <property type="entry name" value="ATP-DEPENDENT CLP PROTEASE ADAPTER PROTEIN CLPS"/>
    <property type="match status" value="1"/>
</dbReference>
<dbReference type="PANTHER" id="PTHR33473">
    <property type="entry name" value="ATP-DEPENDENT CLP PROTEASE ADAPTER PROTEIN CLPS1, CHLOROPLASTIC"/>
    <property type="match status" value="1"/>
</dbReference>
<dbReference type="Pfam" id="PF02617">
    <property type="entry name" value="ClpS"/>
    <property type="match status" value="1"/>
</dbReference>
<dbReference type="SUPFAM" id="SSF54736">
    <property type="entry name" value="ClpS-like"/>
    <property type="match status" value="1"/>
</dbReference>
<gene>
    <name evidence="1" type="primary">clpS</name>
    <name type="ordered locus">CJJ81176_1125</name>
</gene>
<reference key="1">
    <citation type="submission" date="2006-12" db="EMBL/GenBank/DDBJ databases">
        <authorList>
            <person name="Fouts D.E."/>
            <person name="Nelson K.E."/>
            <person name="Sebastian Y."/>
        </authorList>
    </citation>
    <scope>NUCLEOTIDE SEQUENCE [LARGE SCALE GENOMIC DNA]</scope>
    <source>
        <strain>81-176</strain>
    </source>
</reference>
<feature type="chain" id="PRO_1000022604" description="ATP-dependent Clp protease adapter protein ClpS">
    <location>
        <begin position="1"/>
        <end position="96"/>
    </location>
</feature>
<evidence type="ECO:0000255" key="1">
    <source>
        <dbReference type="HAMAP-Rule" id="MF_00302"/>
    </source>
</evidence>